<keyword id="KW-0413">Isomerase</keyword>
<keyword id="KW-1185">Reference proteome</keyword>
<keyword id="KW-0698">rRNA processing</keyword>
<keyword id="KW-0819">tRNA processing</keyword>
<sequence>MGMENYNPPQEPWLVILYQDDHIMVVNKPSGLLSVPGRLEEHKDSVMTRIQRDYPQAESVHRLDMATSGVIVVALTKAAERELKRQFRERVPKKQYVTRVWGHPSPAEGLVDLPLICDWPNRPKQKVCYETGKPAQTEYEVVEYAADNTARVVLKPITGRSHQLRVHMLALGHPILGDRFYASPEARAMAPRLLLHAEMLTITHPAYGNSMTFKAPADF</sequence>
<protein>
    <recommendedName>
        <fullName evidence="1">Dual-specificity RNA pseudouridine synthase RluA</fullName>
        <ecNumber evidence="1">5.4.99.28</ecNumber>
        <ecNumber evidence="1">5.4.99.29</ecNumber>
    </recommendedName>
    <alternativeName>
        <fullName evidence="1">23S rRNA pseudouridine(746) synthase</fullName>
    </alternativeName>
    <alternativeName>
        <fullName evidence="1">Ribosomal large subunit pseudouridine synthase A</fullName>
    </alternativeName>
    <alternativeName>
        <fullName evidence="1">rRNA pseudouridylate synthase A</fullName>
    </alternativeName>
    <alternativeName>
        <fullName evidence="1">rRNA-uridine isomerase A</fullName>
    </alternativeName>
    <alternativeName>
        <fullName evidence="1">tRNA pseudouridine(32) synthase</fullName>
    </alternativeName>
</protein>
<dbReference type="EC" id="5.4.99.28" evidence="1"/>
<dbReference type="EC" id="5.4.99.29" evidence="1"/>
<dbReference type="EMBL" id="AE005174">
    <property type="protein sequence ID" value="AAG54362.1"/>
    <property type="molecule type" value="Genomic_DNA"/>
</dbReference>
<dbReference type="EMBL" id="BA000007">
    <property type="protein sequence ID" value="BAB33485.1"/>
    <property type="molecule type" value="Genomic_DNA"/>
</dbReference>
<dbReference type="PIR" id="F85487">
    <property type="entry name" value="F85487"/>
</dbReference>
<dbReference type="PIR" id="F90636">
    <property type="entry name" value="F90636"/>
</dbReference>
<dbReference type="RefSeq" id="NP_308089.1">
    <property type="nucleotide sequence ID" value="NC_002695.1"/>
</dbReference>
<dbReference type="RefSeq" id="WP_000525186.1">
    <property type="nucleotide sequence ID" value="NZ_VOAI01000002.1"/>
</dbReference>
<dbReference type="SMR" id="Q8XA10"/>
<dbReference type="STRING" id="155864.Z0066"/>
<dbReference type="GeneID" id="913462"/>
<dbReference type="KEGG" id="ece:Z0066"/>
<dbReference type="KEGG" id="ecs:ECs_0062"/>
<dbReference type="PATRIC" id="fig|386585.9.peg.161"/>
<dbReference type="eggNOG" id="COG0564">
    <property type="taxonomic scope" value="Bacteria"/>
</dbReference>
<dbReference type="HOGENOM" id="CLU_016902_11_1_6"/>
<dbReference type="OMA" id="YGFCEPA"/>
<dbReference type="Proteomes" id="UP000000558">
    <property type="component" value="Chromosome"/>
</dbReference>
<dbReference type="Proteomes" id="UP000002519">
    <property type="component" value="Chromosome"/>
</dbReference>
<dbReference type="GO" id="GO:0160142">
    <property type="term" value="F:23S rRNA pseudouridine(746) synthase activity"/>
    <property type="evidence" value="ECO:0007669"/>
    <property type="project" value="UniProtKB-EC"/>
</dbReference>
<dbReference type="GO" id="GO:0003723">
    <property type="term" value="F:RNA binding"/>
    <property type="evidence" value="ECO:0007669"/>
    <property type="project" value="InterPro"/>
</dbReference>
<dbReference type="GO" id="GO:0160151">
    <property type="term" value="F:tRNA pseudouridine(32) synthase activity"/>
    <property type="evidence" value="ECO:0007669"/>
    <property type="project" value="UniProtKB-EC"/>
</dbReference>
<dbReference type="GO" id="GO:0000455">
    <property type="term" value="P:enzyme-directed rRNA pseudouridine synthesis"/>
    <property type="evidence" value="ECO:0007669"/>
    <property type="project" value="TreeGrafter"/>
</dbReference>
<dbReference type="GO" id="GO:0008033">
    <property type="term" value="P:tRNA processing"/>
    <property type="evidence" value="ECO:0007669"/>
    <property type="project" value="UniProtKB-KW"/>
</dbReference>
<dbReference type="CDD" id="cd02869">
    <property type="entry name" value="PseudoU_synth_RluA_like"/>
    <property type="match status" value="1"/>
</dbReference>
<dbReference type="FunFam" id="3.30.2350.10:FF:000005">
    <property type="entry name" value="Pseudouridine synthase"/>
    <property type="match status" value="1"/>
</dbReference>
<dbReference type="Gene3D" id="3.30.2350.10">
    <property type="entry name" value="Pseudouridine synthase"/>
    <property type="match status" value="1"/>
</dbReference>
<dbReference type="InterPro" id="IPR020103">
    <property type="entry name" value="PsdUridine_synth_cat_dom_sf"/>
</dbReference>
<dbReference type="InterPro" id="IPR006224">
    <property type="entry name" value="PsdUridine_synth_RluA-like_CS"/>
</dbReference>
<dbReference type="InterPro" id="IPR006225">
    <property type="entry name" value="PsdUridine_synth_RluC/D"/>
</dbReference>
<dbReference type="InterPro" id="IPR006145">
    <property type="entry name" value="PsdUridine_synth_RsuA/RluA"/>
</dbReference>
<dbReference type="InterPro" id="IPR050188">
    <property type="entry name" value="RluA_PseudoU_synthase"/>
</dbReference>
<dbReference type="NCBIfam" id="NF007543">
    <property type="entry name" value="PRK10158.1"/>
    <property type="match status" value="1"/>
</dbReference>
<dbReference type="NCBIfam" id="TIGR00005">
    <property type="entry name" value="rluA_subfam"/>
    <property type="match status" value="1"/>
</dbReference>
<dbReference type="PANTHER" id="PTHR21600:SF91">
    <property type="entry name" value="DUAL-SPECIFICITY RNA PSEUDOURIDINE SYNTHASE RLUA"/>
    <property type="match status" value="1"/>
</dbReference>
<dbReference type="PANTHER" id="PTHR21600">
    <property type="entry name" value="MITOCHONDRIAL RNA PSEUDOURIDINE SYNTHASE"/>
    <property type="match status" value="1"/>
</dbReference>
<dbReference type="Pfam" id="PF00849">
    <property type="entry name" value="PseudoU_synth_2"/>
    <property type="match status" value="1"/>
</dbReference>
<dbReference type="SUPFAM" id="SSF55120">
    <property type="entry name" value="Pseudouridine synthase"/>
    <property type="match status" value="1"/>
</dbReference>
<dbReference type="PROSITE" id="PS01129">
    <property type="entry name" value="PSI_RLU"/>
    <property type="match status" value="1"/>
</dbReference>
<reference key="1">
    <citation type="journal article" date="2001" name="Nature">
        <title>Genome sequence of enterohaemorrhagic Escherichia coli O157:H7.</title>
        <authorList>
            <person name="Perna N.T."/>
            <person name="Plunkett G. III"/>
            <person name="Burland V."/>
            <person name="Mau B."/>
            <person name="Glasner J.D."/>
            <person name="Rose D.J."/>
            <person name="Mayhew G.F."/>
            <person name="Evans P.S."/>
            <person name="Gregor J."/>
            <person name="Kirkpatrick H.A."/>
            <person name="Posfai G."/>
            <person name="Hackett J."/>
            <person name="Klink S."/>
            <person name="Boutin A."/>
            <person name="Shao Y."/>
            <person name="Miller L."/>
            <person name="Grotbeck E.J."/>
            <person name="Davis N.W."/>
            <person name="Lim A."/>
            <person name="Dimalanta E.T."/>
            <person name="Potamousis K."/>
            <person name="Apodaca J."/>
            <person name="Anantharaman T.S."/>
            <person name="Lin J."/>
            <person name="Yen G."/>
            <person name="Schwartz D.C."/>
            <person name="Welch R.A."/>
            <person name="Blattner F.R."/>
        </authorList>
    </citation>
    <scope>NUCLEOTIDE SEQUENCE [LARGE SCALE GENOMIC DNA]</scope>
    <source>
        <strain>O157:H7 / EDL933 / ATCC 700927 / EHEC</strain>
    </source>
</reference>
<reference key="2">
    <citation type="journal article" date="2001" name="DNA Res.">
        <title>Complete genome sequence of enterohemorrhagic Escherichia coli O157:H7 and genomic comparison with a laboratory strain K-12.</title>
        <authorList>
            <person name="Hayashi T."/>
            <person name="Makino K."/>
            <person name="Ohnishi M."/>
            <person name="Kurokawa K."/>
            <person name="Ishii K."/>
            <person name="Yokoyama K."/>
            <person name="Han C.-G."/>
            <person name="Ohtsubo E."/>
            <person name="Nakayama K."/>
            <person name="Murata T."/>
            <person name="Tanaka M."/>
            <person name="Tobe T."/>
            <person name="Iida T."/>
            <person name="Takami H."/>
            <person name="Honda T."/>
            <person name="Sasakawa C."/>
            <person name="Ogasawara N."/>
            <person name="Yasunaga T."/>
            <person name="Kuhara S."/>
            <person name="Shiba T."/>
            <person name="Hattori M."/>
            <person name="Shinagawa H."/>
        </authorList>
    </citation>
    <scope>NUCLEOTIDE SEQUENCE [LARGE SCALE GENOMIC DNA]</scope>
    <source>
        <strain>O157:H7 / Sakai / RIMD 0509952 / EHEC</strain>
    </source>
</reference>
<accession>Q8XA10</accession>
<organism>
    <name type="scientific">Escherichia coli O157:H7</name>
    <dbReference type="NCBI Taxonomy" id="83334"/>
    <lineage>
        <taxon>Bacteria</taxon>
        <taxon>Pseudomonadati</taxon>
        <taxon>Pseudomonadota</taxon>
        <taxon>Gammaproteobacteria</taxon>
        <taxon>Enterobacterales</taxon>
        <taxon>Enterobacteriaceae</taxon>
        <taxon>Escherichia</taxon>
    </lineage>
</organism>
<proteinExistence type="inferred from homology"/>
<comment type="function">
    <text evidence="1">Dual specificity enzyme that catalyzes the synthesis of pseudouridine from uracil-746 in 23S ribosomal RNA and from uracil-32 in the anticodon stem and loop of transfer RNAs.</text>
</comment>
<comment type="catalytic activity">
    <reaction evidence="1">
        <text>uridine(32) in tRNA = pseudouridine(32) in tRNA</text>
        <dbReference type="Rhea" id="RHEA:42544"/>
        <dbReference type="Rhea" id="RHEA-COMP:10107"/>
        <dbReference type="Rhea" id="RHEA-COMP:10108"/>
        <dbReference type="ChEBI" id="CHEBI:65314"/>
        <dbReference type="ChEBI" id="CHEBI:65315"/>
        <dbReference type="EC" id="5.4.99.28"/>
    </reaction>
</comment>
<comment type="catalytic activity">
    <reaction evidence="1">
        <text>uridine(746) in 23S rRNA = pseudouridine(746) in 23S rRNA</text>
        <dbReference type="Rhea" id="RHEA:42548"/>
        <dbReference type="Rhea" id="RHEA-COMP:10109"/>
        <dbReference type="Rhea" id="RHEA-COMP:10110"/>
        <dbReference type="ChEBI" id="CHEBI:65314"/>
        <dbReference type="ChEBI" id="CHEBI:65315"/>
        <dbReference type="EC" id="5.4.99.29"/>
    </reaction>
</comment>
<comment type="similarity">
    <text evidence="2">Belongs to the pseudouridine synthase RluA family.</text>
</comment>
<name>RLUA_ECO57</name>
<evidence type="ECO:0000250" key="1">
    <source>
        <dbReference type="UniProtKB" id="P0AA37"/>
    </source>
</evidence>
<evidence type="ECO:0000305" key="2"/>
<gene>
    <name type="primary">rluA</name>
    <name type="ordered locus">Z0066</name>
    <name type="ordered locus">ECs0062</name>
</gene>
<feature type="initiator methionine" description="Removed" evidence="1">
    <location>
        <position position="1"/>
    </location>
</feature>
<feature type="chain" id="PRO_0000162653" description="Dual-specificity RNA pseudouridine synthase RluA">
    <location>
        <begin position="2"/>
        <end position="219"/>
    </location>
</feature>
<feature type="active site" evidence="1">
    <location>
        <position position="64"/>
    </location>
</feature>